<proteinExistence type="evidence at protein level"/>
<feature type="chain" id="PRO_0000460298" description="Baeyer-Villiger monooxygenase peniC">
    <location>
        <begin position="1"/>
        <end position="614"/>
    </location>
</feature>
<feature type="binding site" evidence="1">
    <location>
        <position position="99"/>
    </location>
    <ligand>
        <name>FAD</name>
        <dbReference type="ChEBI" id="CHEBI:57692"/>
    </ligand>
</feature>
<feature type="binding site" evidence="1">
    <location>
        <begin position="107"/>
        <end position="110"/>
    </location>
    <ligand>
        <name>FAD</name>
        <dbReference type="ChEBI" id="CHEBI:57692"/>
    </ligand>
</feature>
<feature type="binding site" evidence="1">
    <location>
        <position position="119"/>
    </location>
    <ligand>
        <name>FAD</name>
        <dbReference type="ChEBI" id="CHEBI:57692"/>
    </ligand>
</feature>
<feature type="binding site" evidence="1">
    <location>
        <position position="125"/>
    </location>
    <ligand>
        <name>FAD</name>
        <dbReference type="ChEBI" id="CHEBI:57692"/>
    </ligand>
</feature>
<feature type="binding site" evidence="1">
    <location>
        <begin position="255"/>
        <end position="261"/>
    </location>
    <ligand>
        <name>NADP(+)</name>
        <dbReference type="ChEBI" id="CHEBI:58349"/>
    </ligand>
</feature>
<feature type="binding site" evidence="1">
    <location>
        <begin position="278"/>
        <end position="279"/>
    </location>
    <ligand>
        <name>NADP(+)</name>
        <dbReference type="ChEBI" id="CHEBI:58349"/>
    </ligand>
</feature>
<feature type="binding site" evidence="1">
    <location>
        <begin position="398"/>
        <end position="399"/>
    </location>
    <ligand>
        <name>NADP(+)</name>
        <dbReference type="ChEBI" id="CHEBI:58349"/>
    </ligand>
</feature>
<feature type="site" description="Transition state stabilizer" evidence="1">
    <location>
        <position position="399"/>
    </location>
</feature>
<comment type="function">
    <text evidence="2">Baeyer-Villiger monooxygenase; part of the gene cluster that mediates the biosynthesis of penifulvin A, a potent insecticidal sesquiterpene that features a [5.5.5.6]dioxafenestrane ring (PubMed:30908782). Within the pathway, peniC is responsible for the final regioselective Baeyer-Villiger oxidation of gamma-lactone-2-keto[5.5.5.5]fenestran between C1 and C2 to form the delta-lactone moiety of penifulvin A (PubMed:30908782). The first step of the pathway is performed by the sesquiterpene cyclase peniA that generates the angular triquinane scaffold silphinene via cyclization of the linear farnesyl pyrophosphate (FPP). The cytochrome P450 monooxygenase peniB and the flavin-dependent monooxygenase peniC then catalyze a series of oxidation reactions to transform silphinene into penifulvin A (PubMed:30908782).</text>
</comment>
<comment type="catalytic activity">
    <reaction evidence="2">
        <text>gamma-lactone-2-keto[5.5.5.5]fenestrane + NADPH + O2 + H(+) = penifulvin A + NADP(+) + H2O</text>
        <dbReference type="Rhea" id="RHEA:78663"/>
        <dbReference type="ChEBI" id="CHEBI:15377"/>
        <dbReference type="ChEBI" id="CHEBI:15378"/>
        <dbReference type="ChEBI" id="CHEBI:15379"/>
        <dbReference type="ChEBI" id="CHEBI:57783"/>
        <dbReference type="ChEBI" id="CHEBI:58349"/>
        <dbReference type="ChEBI" id="CHEBI:209256"/>
        <dbReference type="ChEBI" id="CHEBI:229524"/>
    </reaction>
    <physiologicalReaction direction="left-to-right" evidence="2">
        <dbReference type="Rhea" id="RHEA:78664"/>
    </physiologicalReaction>
</comment>
<comment type="cofactor">
    <cofactor evidence="1">
        <name>FAD</name>
        <dbReference type="ChEBI" id="CHEBI:57692"/>
    </cofactor>
    <text evidence="1">Binds 1 FAD per subunit.</text>
</comment>
<comment type="pathway">
    <text evidence="2">Secondary metabolite biosynthesis; terpenoid biosynthesis.</text>
</comment>
<comment type="disruption phenotype">
    <text evidence="2">Abolishes the production of penifulvin A and leads to the accumulation of gamma-lactone-2-keto[5.5.5.5]fenestran.</text>
</comment>
<comment type="similarity">
    <text evidence="4">Belongs to the FAD-binding monooxygenase family.</text>
</comment>
<keyword id="KW-0274">FAD</keyword>
<keyword id="KW-0285">Flavoprotein</keyword>
<keyword id="KW-0503">Monooxygenase</keyword>
<keyword id="KW-0521">NADP</keyword>
<keyword id="KW-0560">Oxidoreductase</keyword>
<accession>A0A516F3Z6</accession>
<reference key="1">
    <citation type="journal article" date="2019" name="Angew. Chem. Int. Ed.">
        <title>Unprecedented [5.5.5.6]dioxafenestrane ring construction in fungal insecticidal sesquiterpene biosynthesis.</title>
        <authorList>
            <person name="Zeng H."/>
            <person name="Yin G."/>
            <person name="Wei Q."/>
            <person name="Li D."/>
            <person name="Wang Y."/>
            <person name="Hu Y."/>
            <person name="Hu C."/>
            <person name="Zou Y."/>
        </authorList>
    </citation>
    <scope>NUCLEOTIDE SEQUENCE [GENOMIC DNA]</scope>
    <scope>FUNCTION</scope>
    <scope>DISRUPTION PHENOTYPE</scope>
    <scope>CATALYTIC ACTIVITY</scope>
    <scope>PATHWAY</scope>
    <source>
        <strain>NRRL 35584</strain>
    </source>
</reference>
<gene>
    <name evidence="3" type="primary">peniC</name>
</gene>
<name>PENIC_PENPA</name>
<dbReference type="EC" id="1.14.13.-" evidence="2"/>
<dbReference type="EMBL" id="MK692947">
    <property type="protein sequence ID" value="QDO73504.1"/>
    <property type="molecule type" value="Genomic_DNA"/>
</dbReference>
<dbReference type="SMR" id="A0A516F3Z6"/>
<dbReference type="UniPathway" id="UPA00213"/>
<dbReference type="GO" id="GO:0004497">
    <property type="term" value="F:monooxygenase activity"/>
    <property type="evidence" value="ECO:0007669"/>
    <property type="project" value="UniProtKB-KW"/>
</dbReference>
<dbReference type="Gene3D" id="3.50.50.60">
    <property type="entry name" value="FAD/NAD(P)-binding domain"/>
    <property type="match status" value="2"/>
</dbReference>
<dbReference type="InterPro" id="IPR050775">
    <property type="entry name" value="FAD-binding_Monooxygenases"/>
</dbReference>
<dbReference type="InterPro" id="IPR036188">
    <property type="entry name" value="FAD/NAD-bd_sf"/>
</dbReference>
<dbReference type="PANTHER" id="PTHR43098:SF4">
    <property type="entry name" value="BLR3857 PROTEIN"/>
    <property type="match status" value="1"/>
</dbReference>
<dbReference type="PANTHER" id="PTHR43098">
    <property type="entry name" value="L-ORNITHINE N(5)-MONOOXYGENASE-RELATED"/>
    <property type="match status" value="1"/>
</dbReference>
<dbReference type="Pfam" id="PF13738">
    <property type="entry name" value="Pyr_redox_3"/>
    <property type="match status" value="1"/>
</dbReference>
<dbReference type="SUPFAM" id="SSF51905">
    <property type="entry name" value="FAD/NAD(P)-binding domain"/>
    <property type="match status" value="1"/>
</dbReference>
<sequence>MGSISPLPLTPDASCCPREVILEKYQQERKKRQLNCVPDNEATELHHKYAPVQGVDQPSYTRSPIITDSKVVIIGGGLAGLVTAVKLKTQGINDFVILEKGAECGGTWHWNQYPGAACDIESLIYLPLLEETGYVPQSRYSSGAEIRAHVARIILKWNLGEHICPLTQVTSTKWDESKLRWEVQTDHSDSLTCQFLVLATGLFHEPNLPRIPGSERFKGDQFHSGRWDYAVTGGDPAGSVPMDKLATKTVGVIGTGASGVQIVPRLAQDAKKLYVFQRTPSSITARDNYTMTPLMTEPVIQKPGWQRARMVQFCEMLEAEEHEMSDKDGTVAEGFDALSLRKVLNGMRKDDVAPAQMGELYARADISLMESIRKHVSNTVDDHETAEKLKPWYPFLCKRPVFQNDYLSSFNRSTVELVDTNGQGVSCLTEKGVVANGKEHEVDLLIYATGFDYEIGTPFYQRTRIHVFGSHGQTLDDAWADQGPSTLFGIHIRDFPNLLYIGPCQAGVTFNFTHTIYEAADHISHVIGDCLKDGASFQAIQPSIEAQSDWVKQTEEGSEMRLQYAQSCPPGYFNGHGRPEKIPARWGYYPKGIKAWANAMRECRAEGMKGLERW</sequence>
<organism evidence="5">
    <name type="scientific">Penicillium patulum</name>
    <name type="common">Penicillium griseofulvum</name>
    <dbReference type="NCBI Taxonomy" id="5078"/>
    <lineage>
        <taxon>Eukaryota</taxon>
        <taxon>Fungi</taxon>
        <taxon>Dikarya</taxon>
        <taxon>Ascomycota</taxon>
        <taxon>Pezizomycotina</taxon>
        <taxon>Eurotiomycetes</taxon>
        <taxon>Eurotiomycetidae</taxon>
        <taxon>Eurotiales</taxon>
        <taxon>Aspergillaceae</taxon>
        <taxon>Penicillium</taxon>
    </lineage>
</organism>
<protein>
    <recommendedName>
        <fullName evidence="3">Baeyer-Villiger monooxygenase peniC</fullName>
        <ecNumber evidence="2">1.14.13.-</ecNumber>
    </recommendedName>
    <alternativeName>
        <fullName evidence="3">Flavin-dependent monooxygenase peniC</fullName>
    </alternativeName>
    <alternativeName>
        <fullName evidence="3">Penifulvin A biosynthesis cluster protein C</fullName>
    </alternativeName>
</protein>
<evidence type="ECO:0000250" key="1">
    <source>
        <dbReference type="UniProtKB" id="Q47PU3"/>
    </source>
</evidence>
<evidence type="ECO:0000269" key="2">
    <source>
    </source>
</evidence>
<evidence type="ECO:0000303" key="3">
    <source>
    </source>
</evidence>
<evidence type="ECO:0000305" key="4"/>
<evidence type="ECO:0000312" key="5">
    <source>
        <dbReference type="EMBL" id="QDO73504.1"/>
    </source>
</evidence>